<organism>
    <name type="scientific">Saccharolobus islandicus (strain M.14.25 / Kamchatka #1)</name>
    <name type="common">Sulfolobus islandicus</name>
    <dbReference type="NCBI Taxonomy" id="427317"/>
    <lineage>
        <taxon>Archaea</taxon>
        <taxon>Thermoproteota</taxon>
        <taxon>Thermoprotei</taxon>
        <taxon>Sulfolobales</taxon>
        <taxon>Sulfolobaceae</taxon>
        <taxon>Saccharolobus</taxon>
    </lineage>
</organism>
<keyword id="KW-0963">Cytoplasm</keyword>
<keyword id="KW-0324">Glycolysis</keyword>
<keyword id="KW-0520">NAD</keyword>
<keyword id="KW-0521">NADP</keyword>
<keyword id="KW-0560">Oxidoreductase</keyword>
<accession>C3MWN0</accession>
<reference key="1">
    <citation type="journal article" date="2009" name="Proc. Natl. Acad. Sci. U.S.A.">
        <title>Biogeography of the Sulfolobus islandicus pan-genome.</title>
        <authorList>
            <person name="Reno M.L."/>
            <person name="Held N.L."/>
            <person name="Fields C.J."/>
            <person name="Burke P.V."/>
            <person name="Whitaker R.J."/>
        </authorList>
    </citation>
    <scope>NUCLEOTIDE SEQUENCE [LARGE SCALE GENOMIC DNA]</scope>
    <source>
        <strain>M.14.25 / Kamchatka #1</strain>
    </source>
</reference>
<gene>
    <name evidence="1" type="primary">gap</name>
    <name type="ordered locus">M1425_1581</name>
</gene>
<evidence type="ECO:0000255" key="1">
    <source>
        <dbReference type="HAMAP-Rule" id="MF_00559"/>
    </source>
</evidence>
<name>G3P_SACI4</name>
<feature type="chain" id="PRO_1000212038" description="Glyceraldehyde-3-phosphate dehydrogenase">
    <location>
        <begin position="1"/>
        <end position="340"/>
    </location>
</feature>
<feature type="active site" description="Nucleophile" evidence="1">
    <location>
        <position position="139"/>
    </location>
</feature>
<feature type="binding site" evidence="1">
    <location>
        <begin position="11"/>
        <end position="12"/>
    </location>
    <ligand>
        <name>NAD(+)</name>
        <dbReference type="ChEBI" id="CHEBI:57540"/>
    </ligand>
</feature>
<feature type="binding site" evidence="1">
    <location>
        <position position="109"/>
    </location>
    <ligand>
        <name>NAD(+)</name>
        <dbReference type="ChEBI" id="CHEBI:57540"/>
    </ligand>
</feature>
<feature type="binding site" evidence="1">
    <location>
        <begin position="138"/>
        <end position="140"/>
    </location>
    <ligand>
        <name>D-glyceraldehyde 3-phosphate</name>
        <dbReference type="ChEBI" id="CHEBI:59776"/>
    </ligand>
</feature>
<feature type="binding site" evidence="1">
    <location>
        <position position="167"/>
    </location>
    <ligand>
        <name>NAD(+)</name>
        <dbReference type="ChEBI" id="CHEBI:57540"/>
    </ligand>
</feature>
<feature type="binding site" evidence="1">
    <location>
        <begin position="193"/>
        <end position="194"/>
    </location>
    <ligand>
        <name>D-glyceraldehyde 3-phosphate</name>
        <dbReference type="ChEBI" id="CHEBI:59776"/>
    </ligand>
</feature>
<feature type="binding site" evidence="1">
    <location>
        <position position="300"/>
    </location>
    <ligand>
        <name>NAD(+)</name>
        <dbReference type="ChEBI" id="CHEBI:57540"/>
    </ligand>
</feature>
<proteinExistence type="inferred from homology"/>
<protein>
    <recommendedName>
        <fullName evidence="1">Glyceraldehyde-3-phosphate dehydrogenase</fullName>
        <shortName evidence="1">GAPDH</shortName>
        <ecNumber evidence="1">1.2.1.59</ecNumber>
    </recommendedName>
    <alternativeName>
        <fullName evidence="1">NAD(P)-dependent glyceraldehyde-3-phosphate dehydrogenase</fullName>
    </alternativeName>
</protein>
<comment type="catalytic activity">
    <reaction evidence="1">
        <text>D-glyceraldehyde 3-phosphate + phosphate + NADP(+) = (2R)-3-phospho-glyceroyl phosphate + NADPH + H(+)</text>
        <dbReference type="Rhea" id="RHEA:10296"/>
        <dbReference type="ChEBI" id="CHEBI:15378"/>
        <dbReference type="ChEBI" id="CHEBI:43474"/>
        <dbReference type="ChEBI" id="CHEBI:57604"/>
        <dbReference type="ChEBI" id="CHEBI:57783"/>
        <dbReference type="ChEBI" id="CHEBI:58349"/>
        <dbReference type="ChEBI" id="CHEBI:59776"/>
        <dbReference type="EC" id="1.2.1.59"/>
    </reaction>
</comment>
<comment type="catalytic activity">
    <reaction evidence="1">
        <text>D-glyceraldehyde 3-phosphate + phosphate + NAD(+) = (2R)-3-phospho-glyceroyl phosphate + NADH + H(+)</text>
        <dbReference type="Rhea" id="RHEA:10300"/>
        <dbReference type="ChEBI" id="CHEBI:15378"/>
        <dbReference type="ChEBI" id="CHEBI:43474"/>
        <dbReference type="ChEBI" id="CHEBI:57540"/>
        <dbReference type="ChEBI" id="CHEBI:57604"/>
        <dbReference type="ChEBI" id="CHEBI:57945"/>
        <dbReference type="ChEBI" id="CHEBI:59776"/>
        <dbReference type="EC" id="1.2.1.59"/>
    </reaction>
</comment>
<comment type="pathway">
    <text evidence="1">Carbohydrate degradation; glycolysis; pyruvate from D-glyceraldehyde 3-phosphate: step 1/5.</text>
</comment>
<comment type="subunit">
    <text evidence="1">Homotetramer.</text>
</comment>
<comment type="subcellular location">
    <subcellularLocation>
        <location evidence="1">Cytoplasm</location>
    </subcellularLocation>
</comment>
<comment type="similarity">
    <text evidence="1">Belongs to the glyceraldehyde-3-phosphate dehydrogenase family.</text>
</comment>
<dbReference type="EC" id="1.2.1.59" evidence="1"/>
<dbReference type="EMBL" id="CP001400">
    <property type="protein sequence ID" value="ACP38330.1"/>
    <property type="molecule type" value="Genomic_DNA"/>
</dbReference>
<dbReference type="RefSeq" id="WP_012711574.1">
    <property type="nucleotide sequence ID" value="NC_012588.1"/>
</dbReference>
<dbReference type="SMR" id="C3MWN0"/>
<dbReference type="KEGG" id="sia:M1425_1581"/>
<dbReference type="HOGENOM" id="CLU_069533_0_0_2"/>
<dbReference type="UniPathway" id="UPA00109">
    <property type="reaction ID" value="UER00184"/>
</dbReference>
<dbReference type="Proteomes" id="UP000001350">
    <property type="component" value="Chromosome"/>
</dbReference>
<dbReference type="GO" id="GO:0005737">
    <property type="term" value="C:cytoplasm"/>
    <property type="evidence" value="ECO:0007669"/>
    <property type="project" value="UniProtKB-SubCell"/>
</dbReference>
<dbReference type="GO" id="GO:0008839">
    <property type="term" value="F:4-hydroxy-tetrahydrodipicolinate reductase"/>
    <property type="evidence" value="ECO:0007669"/>
    <property type="project" value="InterPro"/>
</dbReference>
<dbReference type="GO" id="GO:0004365">
    <property type="term" value="F:glyceraldehyde-3-phosphate dehydrogenase (NAD+) (phosphorylating) activity"/>
    <property type="evidence" value="ECO:0007669"/>
    <property type="project" value="UniProtKB-UniRule"/>
</dbReference>
<dbReference type="GO" id="GO:0047100">
    <property type="term" value="F:glyceraldehyde-3-phosphate dehydrogenase (NADP+) (phosphorylating) activity"/>
    <property type="evidence" value="ECO:0007669"/>
    <property type="project" value="RHEA"/>
</dbReference>
<dbReference type="GO" id="GO:0051287">
    <property type="term" value="F:NAD binding"/>
    <property type="evidence" value="ECO:0007669"/>
    <property type="project" value="InterPro"/>
</dbReference>
<dbReference type="GO" id="GO:0050661">
    <property type="term" value="F:NADP binding"/>
    <property type="evidence" value="ECO:0007669"/>
    <property type="project" value="InterPro"/>
</dbReference>
<dbReference type="GO" id="GO:0006096">
    <property type="term" value="P:glycolytic process"/>
    <property type="evidence" value="ECO:0007669"/>
    <property type="project" value="UniProtKB-UniRule"/>
</dbReference>
<dbReference type="GO" id="GO:0009089">
    <property type="term" value="P:lysine biosynthetic process via diaminopimelate"/>
    <property type="evidence" value="ECO:0007669"/>
    <property type="project" value="InterPro"/>
</dbReference>
<dbReference type="CDD" id="cd18127">
    <property type="entry name" value="GAPDH_II_C"/>
    <property type="match status" value="1"/>
</dbReference>
<dbReference type="CDD" id="cd02278">
    <property type="entry name" value="GAPDH_II_N"/>
    <property type="match status" value="1"/>
</dbReference>
<dbReference type="Gene3D" id="3.30.360.10">
    <property type="entry name" value="Dihydrodipicolinate Reductase, domain 2"/>
    <property type="match status" value="1"/>
</dbReference>
<dbReference type="Gene3D" id="3.40.50.720">
    <property type="entry name" value="NAD(P)-binding Rossmann-like Domain"/>
    <property type="match status" value="1"/>
</dbReference>
<dbReference type="HAMAP" id="MF_00559">
    <property type="entry name" value="G3P_dehdrog_arch"/>
    <property type="match status" value="1"/>
</dbReference>
<dbReference type="InterPro" id="IPR000846">
    <property type="entry name" value="DapB_N"/>
</dbReference>
<dbReference type="InterPro" id="IPR020831">
    <property type="entry name" value="GlycerAld/Erythrose_P_DH"/>
</dbReference>
<dbReference type="InterPro" id="IPR020830">
    <property type="entry name" value="GlycerAld_3-P_DH_AS"/>
</dbReference>
<dbReference type="InterPro" id="IPR020829">
    <property type="entry name" value="GlycerAld_3-P_DH_cat"/>
</dbReference>
<dbReference type="InterPro" id="IPR020828">
    <property type="entry name" value="GlycerAld_3-P_DH_NAD(P)-bd"/>
</dbReference>
<dbReference type="InterPro" id="IPR006436">
    <property type="entry name" value="Glyceraldehyde-3-P_DH_2_arc"/>
</dbReference>
<dbReference type="InterPro" id="IPR036291">
    <property type="entry name" value="NAD(P)-bd_dom_sf"/>
</dbReference>
<dbReference type="NCBIfam" id="TIGR01546">
    <property type="entry name" value="GAPDH-II_archae"/>
    <property type="match status" value="1"/>
</dbReference>
<dbReference type="NCBIfam" id="NF003251">
    <property type="entry name" value="PRK04207.1"/>
    <property type="match status" value="1"/>
</dbReference>
<dbReference type="Pfam" id="PF01113">
    <property type="entry name" value="DapB_N"/>
    <property type="match status" value="1"/>
</dbReference>
<dbReference type="Pfam" id="PF02800">
    <property type="entry name" value="Gp_dh_C"/>
    <property type="match status" value="1"/>
</dbReference>
<dbReference type="PIRSF" id="PIRSF000149">
    <property type="entry name" value="GAP_DH"/>
    <property type="match status" value="1"/>
</dbReference>
<dbReference type="SMART" id="SM00846">
    <property type="entry name" value="Gp_dh_N"/>
    <property type="match status" value="1"/>
</dbReference>
<dbReference type="SUPFAM" id="SSF55347">
    <property type="entry name" value="Glyceraldehyde-3-phosphate dehydrogenase-like, C-terminal domain"/>
    <property type="match status" value="1"/>
</dbReference>
<dbReference type="SUPFAM" id="SSF51735">
    <property type="entry name" value="NAD(P)-binding Rossmann-fold domains"/>
    <property type="match status" value="1"/>
</dbReference>
<dbReference type="PROSITE" id="PS00071">
    <property type="entry name" value="GAPDH"/>
    <property type="match status" value="1"/>
</dbReference>
<sequence length="340" mass="37568">MISVAVNGYGTIGKRVADAILKQPDMRLIGVAKTSPNYEAFIAHRKGIKIYVPQQSIKKFEESGIPVAGTIEDLVKASDIVVDTTPNGVGAQYKPIYQQFQRNAIFQGGEKAEVADISFSALCNYDEALGKKYIRVVSCNTTALLRTICTINKVTKVEKVRATIVRRAADQKEVKKGPINSLVPDPATVPSHHAKDVNSVIKNLDIVTMAVIAPTTLMHMHFINITLKDKVEKKDVLSVLENTPRIVLISSKYDAEATAELVEVARDLKRERNDIPEVMVFDDSVYVKDNEVMLMYAVHQESIVVPENVDAIRASTRLMSAEDSIRITNESLGILKGYLI</sequence>